<gene>
    <name evidence="5" type="ORF">T5.015</name>
</gene>
<sequence>MVIYEGNRFVAICRPGLLANYLNQVSPEYKGVINIYEGKAHYKINAVVARELAFQFLTFASCDIQVMGEALIAENEDDFINIFRKVYTERLIMKGAYIQSTAESIETAFRKVAQ</sequence>
<accession>Q6QGS2</accession>
<name>APNUC_BPT5</name>
<dbReference type="EC" id="3.1.-.-" evidence="1 2"/>
<dbReference type="EMBL" id="AY543070">
    <property type="protein sequence ID" value="AAS77062.1"/>
    <property type="molecule type" value="Genomic_DNA"/>
</dbReference>
<dbReference type="RefSeq" id="YP_006843.1">
    <property type="nucleotide sequence ID" value="NC_005859.1"/>
</dbReference>
<dbReference type="GeneID" id="2777549"/>
<dbReference type="KEGG" id="vg:2777549"/>
<dbReference type="Proteomes" id="UP000002107">
    <property type="component" value="Genome"/>
</dbReference>
<dbReference type="GO" id="GO:0003906">
    <property type="term" value="F:DNA-(apurinic or apyrimidinic site) endonuclease activity"/>
    <property type="evidence" value="ECO:0007669"/>
    <property type="project" value="UniProtKB-UniRule"/>
</dbReference>
<dbReference type="GO" id="GO:0004519">
    <property type="term" value="F:endonuclease activity"/>
    <property type="evidence" value="ECO:0007669"/>
    <property type="project" value="UniProtKB-KW"/>
</dbReference>
<dbReference type="GO" id="GO:0099015">
    <property type="term" value="P:degradation of host chromosome by virus"/>
    <property type="evidence" value="ECO:0007669"/>
    <property type="project" value="UniProtKB-UniRule"/>
</dbReference>
<dbReference type="GO" id="GO:0039657">
    <property type="term" value="P:symbiont-mediated suppression of host gene expression"/>
    <property type="evidence" value="ECO:0007669"/>
    <property type="project" value="UniProtKB-KW"/>
</dbReference>
<dbReference type="HAMAP" id="MF_04167">
    <property type="entry name" value="APNUC_T5"/>
    <property type="match status" value="1"/>
</dbReference>
<dbReference type="InterPro" id="IPR047587">
    <property type="entry name" value="APNUC_T5"/>
</dbReference>
<reference key="1">
    <citation type="submission" date="2004-01" db="EMBL/GenBank/DDBJ databases">
        <title>Bacteriophage T5 complete genome.</title>
        <authorList>
            <person name="Ksenzenko V.N."/>
            <person name="Kaliman A.V."/>
            <person name="Krutilina A.I."/>
            <person name="Shlyapnikov M.G."/>
        </authorList>
    </citation>
    <scope>NUCLEOTIDE SEQUENCE [LARGE SCALE GENOMIC DNA]</scope>
</reference>
<reference key="2">
    <citation type="journal article" date="2021" name="Proc. Natl. Acad. Sci. U.S.A.">
        <title>A phage mechanism for selective nicking of dUMP-containing DNA.</title>
        <authorList>
            <person name="Mahata T."/>
            <person name="Molshanski-Mor S."/>
            <person name="Goren M.G."/>
            <person name="Jana B."/>
            <person name="Kohen-Manor M."/>
            <person name="Yosef I."/>
            <person name="Avram O."/>
            <person name="Pupko T."/>
            <person name="Salomon D."/>
            <person name="Qimron U."/>
        </authorList>
    </citation>
    <scope>FUNCTION</scope>
    <scope>CATALYTIC ACTIVITY</scope>
    <scope>INTERACTION WITH HOST UNG</scope>
</reference>
<organism>
    <name type="scientific">Escherichia phage T5</name>
    <name type="common">Enterobacteria phage T5</name>
    <dbReference type="NCBI Taxonomy" id="2695836"/>
    <lineage>
        <taxon>Viruses</taxon>
        <taxon>Duplodnaviria</taxon>
        <taxon>Heunggongvirae</taxon>
        <taxon>Uroviricota</taxon>
        <taxon>Caudoviricetes</taxon>
        <taxon>Demerecviridae</taxon>
        <taxon>Markadamsvirinae</taxon>
        <taxon>Tequintavirus</taxon>
        <taxon>Tequintavirus T5</taxon>
    </lineage>
</organism>
<organismHost>
    <name type="scientific">Escherichia coli</name>
    <dbReference type="NCBI Taxonomy" id="562"/>
</organismHost>
<keyword id="KW-1261">Bacterial host gene expression shutoff by virus</keyword>
<keyword id="KW-1247">Degradation of host chromosome by virus</keyword>
<keyword id="KW-0255">Endonuclease</keyword>
<keyword id="KW-1190">Host gene expression shutoff by virus</keyword>
<keyword id="KW-0945">Host-virus interaction</keyword>
<keyword id="KW-0378">Hydrolase</keyword>
<keyword id="KW-0540">Nuclease</keyword>
<keyword id="KW-1185">Reference proteome</keyword>
<protein>
    <recommendedName>
        <fullName evidence="1">DNA-(apurinic or apyrimidinic site) endonuclease</fullName>
        <ecNumber evidence="1 2">3.1.-.-</ecNumber>
    </recommendedName>
    <alternativeName>
        <fullName evidence="1">AP endonuclease</fullName>
    </alternativeName>
    <alternativeName>
        <fullName evidence="1">Apurinic-apyrimidinic endonuclease</fullName>
    </alternativeName>
    <alternativeName>
        <fullName evidence="3">Protein 015</fullName>
    </alternativeName>
</protein>
<comment type="function">
    <text evidence="1 2 4">Performs endonucleolytic cleavage at abasic sites, which are generated by the base-excision activity of host Ung (PubMed:34074772). The cleavage generates a 5'-deoxyribose phosphate and 3'-hydroxyl end (PubMed:34074772). The sites are specifically recognized through the formation of a complex with host Ung (PubMed:34074772). The viral endonucleolytic activity damages the host DNA, blocks host DNA replication and induces cell division arrest (PubMed:34074772). This may provide an advantage for the phage and save nucleotides for the viral replication since it specifically targets the host DNA, which possesses more misincorporated uracils than the viral genome (Probable).</text>
</comment>
<comment type="subunit">
    <text evidence="1 2">Interacts with host Ung; this interaction allows the viral AP endonuclease to localize to newly formed AP sites and cleave them, leading to inhibition of bacterial growth.</text>
</comment>
<comment type="similarity">
    <text evidence="1">Belongs to the apurinic/apyrimidinic endonuclease family.</text>
</comment>
<feature type="chain" id="PRO_0000454039" description="DNA-(apurinic or apyrimidinic site) endonuclease">
    <location>
        <begin position="1"/>
        <end position="114"/>
    </location>
</feature>
<evidence type="ECO:0000255" key="1">
    <source>
        <dbReference type="HAMAP-Rule" id="MF_04167"/>
    </source>
</evidence>
<evidence type="ECO:0000269" key="2">
    <source>
    </source>
</evidence>
<evidence type="ECO:0000303" key="3">
    <source>
    </source>
</evidence>
<evidence type="ECO:0000305" key="4">
    <source>
    </source>
</evidence>
<evidence type="ECO:0000312" key="5">
    <source>
        <dbReference type="EMBL" id="AAS77062.1"/>
    </source>
</evidence>
<proteinExistence type="evidence at protein level"/>